<feature type="chain" id="PRO_0000074388" description="Cleavage and polyadenylation specificity factor subunit 1">
    <location>
        <begin position="1"/>
        <end position="1441"/>
    </location>
</feature>
<feature type="region of interest" description="Disordered" evidence="4">
    <location>
        <begin position="404"/>
        <end position="435"/>
    </location>
</feature>
<feature type="region of interest" description="Disordered" evidence="4">
    <location>
        <begin position="545"/>
        <end position="569"/>
    </location>
</feature>
<feature type="region of interest" description="Disordered" evidence="4">
    <location>
        <begin position="713"/>
        <end position="775"/>
    </location>
</feature>
<feature type="region of interest" description="Disordered" evidence="4">
    <location>
        <begin position="899"/>
        <end position="921"/>
    </location>
</feature>
<feature type="compositionally biased region" description="Basic and acidic residues" evidence="4">
    <location>
        <begin position="410"/>
        <end position="419"/>
    </location>
</feature>
<feature type="compositionally biased region" description="Basic and acidic residues" evidence="4">
    <location>
        <begin position="756"/>
        <end position="773"/>
    </location>
</feature>
<feature type="modified residue" description="Phosphoserine" evidence="7">
    <location>
        <position position="754"/>
    </location>
</feature>
<feature type="modified residue" description="Phosphoserine" evidence="3">
    <location>
        <position position="764"/>
    </location>
</feature>
<gene>
    <name type="primary">Cpsf1</name>
    <name type="synonym">Cpsf160</name>
</gene>
<organism>
    <name type="scientific">Mus musculus</name>
    <name type="common">Mouse</name>
    <dbReference type="NCBI Taxonomy" id="10090"/>
    <lineage>
        <taxon>Eukaryota</taxon>
        <taxon>Metazoa</taxon>
        <taxon>Chordata</taxon>
        <taxon>Craniata</taxon>
        <taxon>Vertebrata</taxon>
        <taxon>Euteleostomi</taxon>
        <taxon>Mammalia</taxon>
        <taxon>Eutheria</taxon>
        <taxon>Euarchontoglires</taxon>
        <taxon>Glires</taxon>
        <taxon>Rodentia</taxon>
        <taxon>Myomorpha</taxon>
        <taxon>Muroidea</taxon>
        <taxon>Muridae</taxon>
        <taxon>Murinae</taxon>
        <taxon>Mus</taxon>
        <taxon>Mus</taxon>
    </lineage>
</organism>
<reference key="1">
    <citation type="journal article" date="2001" name="Biol. Reprod.">
        <title>Overexpression of the CstF-64 and CPSF-160 polyadenylation protein messenger RNAs in mouse male germ cells.</title>
        <authorList>
            <person name="Dass B."/>
            <person name="Attaya E.N."/>
            <person name="Michelle Wallace A."/>
            <person name="MacDonald C.C."/>
        </authorList>
    </citation>
    <scope>NUCLEOTIDE SEQUENCE [MRNA]</scope>
    <source>
        <tissue>Testis</tissue>
    </source>
</reference>
<reference key="2">
    <citation type="journal article" date="2004" name="Genome Res.">
        <title>The status, quality, and expansion of the NIH full-length cDNA project: the Mammalian Gene Collection (MGC).</title>
        <authorList>
            <consortium name="The MGC Project Team"/>
        </authorList>
    </citation>
    <scope>NUCLEOTIDE SEQUENCE [LARGE SCALE MRNA]</scope>
    <source>
        <strain>C57BL/6J</strain>
        <tissue>Brain</tissue>
    </source>
</reference>
<reference key="3">
    <citation type="journal article" date="2007" name="Biochem. Biophys. Res. Commun.">
        <title>Disruption of mouse poly(A) polymerase mGLD-2 does not alter polyadenylation status in oocytes and somatic cells.</title>
        <authorList>
            <person name="Nakanishi T."/>
            <person name="Kumagai S."/>
            <person name="Kimura M."/>
            <person name="Watanabe H."/>
            <person name="Sakurai T."/>
            <person name="Kimura M."/>
            <person name="Kashiwabara S."/>
            <person name="Baba T."/>
        </authorList>
    </citation>
    <scope>INTERACTION WITH TENT2</scope>
</reference>
<reference key="4">
    <citation type="journal article" date="2010" name="Cell">
        <title>A tissue-specific atlas of mouse protein phosphorylation and expression.</title>
        <authorList>
            <person name="Huttlin E.L."/>
            <person name="Jedrychowski M.P."/>
            <person name="Elias J.E."/>
            <person name="Goswami T."/>
            <person name="Rad R."/>
            <person name="Beausoleil S.A."/>
            <person name="Villen J."/>
            <person name="Haas W."/>
            <person name="Sowa M.E."/>
            <person name="Gygi S.P."/>
        </authorList>
    </citation>
    <scope>PHOSPHORYLATION [LARGE SCALE ANALYSIS] AT SER-754</scope>
    <scope>IDENTIFICATION BY MASS SPECTROMETRY [LARGE SCALE ANALYSIS]</scope>
    <source>
        <tissue>Kidney</tissue>
        <tissue>Liver</tissue>
        <tissue>Pancreas</tissue>
        <tissue>Spleen</tissue>
        <tissue>Testis</tissue>
    </source>
</reference>
<proteinExistence type="evidence at protein level"/>
<protein>
    <recommendedName>
        <fullName>Cleavage and polyadenylation specificity factor subunit 1</fullName>
    </recommendedName>
    <alternativeName>
        <fullName>Cleavage and polyadenylation specificity factor 160 kDa subunit</fullName>
        <shortName>CPSF 160 kDa subunit</shortName>
    </alternativeName>
</protein>
<name>CPSF1_MOUSE</name>
<evidence type="ECO:0000250" key="1"/>
<evidence type="ECO:0000250" key="2">
    <source>
        <dbReference type="UniProtKB" id="A0A0R4IC37"/>
    </source>
</evidence>
<evidence type="ECO:0000250" key="3">
    <source>
        <dbReference type="UniProtKB" id="Q10570"/>
    </source>
</evidence>
<evidence type="ECO:0000256" key="4">
    <source>
        <dbReference type="SAM" id="MobiDB-lite"/>
    </source>
</evidence>
<evidence type="ECO:0000269" key="5">
    <source>
    </source>
</evidence>
<evidence type="ECO:0000305" key="6"/>
<evidence type="ECO:0007744" key="7">
    <source>
    </source>
</evidence>
<sequence>MYAVYKQAHPPTGLEFTMYCNFFNNSERNLVVAGTSQLYVYRLNRDAEALTKNDGSTEGKAHREKLELVASFSFFGNVMSMASVQLAGAKRDALLLSFKDAKLSVVEYDPGTHDLKTLSLHYFEEPELRDGFVQNVHTPRVRVDPDGRCAAMLIYGTRLVVLPFRRESLAEEHEGLMGEGQRSSFLPSYIIDVRALDEKLLNIIDLQFLHGYYEPTLLILFEPNQTWPGRVAVRQDTCSIVAISLNITQKVHPVIWSLTSLPFDCTQALAVPKPIGGVVIFAVNSLLYLNQSVPPYGVALNSLTTGTTAFPLRTQEGVRITLDCAQAAFISYDKMVISLKGGEIYVLTLITDGMRSVRAFHFDKAAASVLTTSMVTMEPGYLFLGSRLGNSLLLKYTEKLQEPPASSVREAADKEEPPSKKKRVEPAVGWTGGKTVPQDEVDEIEVYGSEAQSGTQLATYSFEVCDSMLNIGPCANAAVGEPAFLSEEFQNSPEPDLEIVVCSGYGKNGALSVLQKSIRPQVVTTFELPGCYDMWTVIAPVRKEEEETPKAESTEQEPSAPKAEEDGRRHGFLILSREDSTMILQTGQEIMELDTSGFATQGPTVFAGNIGDNRYIVQVSPLGIRLLEGVNQLHFIPVDLGAPIVQCAVADPYVVIMSAEGHVTMFLLKSDSYGGRHHRLALHKPPLHHQSKVIALCLYRDVSGMFTTESRLGGARDELGGRSGSEAEGLGSETSPTVDDEEEMLYGDSSALFSPSKEEARRSSQPPADRDPAPFKADPTHWCLLVRENGTMEIYQLPDWRLVFLVKNFPVGQRVLVDSSFGQPTTQGEVRKEEATRQGELPLVKEVLLVALGSRQSRPYLLVHVDQELLIYEAFPHDSQLGQGNLKVRFKKVPHNINFREKKPKPSKKKAEGCSTEEGSGGRGRVARFRYFEDIYGYSGVFICGPSPHWLLVTGRGALRLHPMGIDGPIDSFAPFHNVNCPRGFLYFNRQGELRISVLPAYLSYDAPWPVRKIPLRCTAHYVAYHVESKVYAVATSTNTPCTRIPRMTGEEKEFEAIERDDRYIHPQQEAFSIQLISPVSWEAIPNARIELEEWEHVTCMKTVSLRSEETVSGLKGYVAAGTCLMQGEEVTCRGRILIMDVIEVVPEPGQPLTKNKFKVLYEKEQKGPVTALCHCNGHLVSAIGQKIFLWSLRASELTGMAFIDTQLYIHQMISVKNFILAADVMKSISLLRYQEESKTLSLVSRDAKPLEVYSVDFMVDNAQLGFLVSDRDRNLMVYMYLPEAKESFGGMRLLRRADFHVGAHVNTFWRTPCRGAAEGPSKKSVVWENKHITWFATLDGGIGLLLPMQEKTYRRLLMLQNALTTMLPHHAGLNPRAFRMLHVDRRILQNAVRNVLDGELLNRYLYLSTMERSELAKKIGTTPDIILDDLLETDRVTAHF</sequence>
<keyword id="KW-0507">mRNA processing</keyword>
<keyword id="KW-0539">Nucleus</keyword>
<keyword id="KW-0597">Phosphoprotein</keyword>
<keyword id="KW-1185">Reference proteome</keyword>
<keyword id="KW-0694">RNA-binding</keyword>
<dbReference type="EMBL" id="AF322193">
    <property type="protein sequence ID" value="AAG40326.1"/>
    <property type="molecule type" value="mRNA"/>
</dbReference>
<dbReference type="EMBL" id="BC056388">
    <property type="protein sequence ID" value="AAH56388.1"/>
    <property type="molecule type" value="mRNA"/>
</dbReference>
<dbReference type="CCDS" id="CCDS27577.1"/>
<dbReference type="RefSeq" id="NP_001157645.1">
    <property type="nucleotide sequence ID" value="NM_001164173.1"/>
</dbReference>
<dbReference type="RefSeq" id="NP_444423.1">
    <property type="nucleotide sequence ID" value="NM_053193.2"/>
</dbReference>
<dbReference type="SMR" id="Q9EPU4"/>
<dbReference type="BioGRID" id="220487">
    <property type="interactions" value="8"/>
</dbReference>
<dbReference type="FunCoup" id="Q9EPU4">
    <property type="interactions" value="3935"/>
</dbReference>
<dbReference type="STRING" id="10090.ENSMUSP00000071794"/>
<dbReference type="GlyGen" id="Q9EPU4">
    <property type="glycosylation" value="1 site, 1 O-linked glycan (1 site)"/>
</dbReference>
<dbReference type="iPTMnet" id="Q9EPU4"/>
<dbReference type="PhosphoSitePlus" id="Q9EPU4"/>
<dbReference type="PaxDb" id="10090-ENSMUSP00000071794"/>
<dbReference type="PeptideAtlas" id="Q9EPU4"/>
<dbReference type="ProteomicsDB" id="283620"/>
<dbReference type="Pumba" id="Q9EPU4"/>
<dbReference type="Antibodypedia" id="14844">
    <property type="antibodies" value="81 antibodies from 22 providers"/>
</dbReference>
<dbReference type="DNASU" id="94230"/>
<dbReference type="Ensembl" id="ENSMUST00000071898.7">
    <property type="protein sequence ID" value="ENSMUSP00000071794.6"/>
    <property type="gene ID" value="ENSMUSG00000034022.9"/>
</dbReference>
<dbReference type="GeneID" id="94230"/>
<dbReference type="KEGG" id="mmu:94230"/>
<dbReference type="UCSC" id="uc007wky.2">
    <property type="organism name" value="mouse"/>
</dbReference>
<dbReference type="AGR" id="MGI:2679722"/>
<dbReference type="CTD" id="29894"/>
<dbReference type="MGI" id="MGI:2679722">
    <property type="gene designation" value="Cpsf1"/>
</dbReference>
<dbReference type="VEuPathDB" id="HostDB:ENSMUSG00000034022"/>
<dbReference type="eggNOG" id="KOG1896">
    <property type="taxonomic scope" value="Eukaryota"/>
</dbReference>
<dbReference type="GeneTree" id="ENSGT00950000183151"/>
<dbReference type="HOGENOM" id="CLU_002414_0_0_1"/>
<dbReference type="InParanoid" id="Q9EPU4"/>
<dbReference type="OMA" id="PMTKFKL"/>
<dbReference type="OrthoDB" id="6109at2759"/>
<dbReference type="PhylomeDB" id="Q9EPU4"/>
<dbReference type="TreeFam" id="TF314322"/>
<dbReference type="Reactome" id="R-MMU-159231">
    <property type="pathway name" value="Transport of Mature mRNA Derived from an Intronless Transcript"/>
</dbReference>
<dbReference type="Reactome" id="R-MMU-72187">
    <property type="pathway name" value="mRNA 3'-end processing"/>
</dbReference>
<dbReference type="Reactome" id="R-MMU-72203">
    <property type="pathway name" value="Processing of Capped Intron-Containing Pre-mRNA"/>
</dbReference>
<dbReference type="Reactome" id="R-MMU-73856">
    <property type="pathway name" value="RNA Polymerase II Transcription Termination"/>
</dbReference>
<dbReference type="Reactome" id="R-MMU-77595">
    <property type="pathway name" value="Processing of Intronless Pre-mRNAs"/>
</dbReference>
<dbReference type="BioGRID-ORCS" id="94230">
    <property type="hits" value="30 hits in 116 CRISPR screens"/>
</dbReference>
<dbReference type="ChiTaRS" id="Cpsf1">
    <property type="organism name" value="mouse"/>
</dbReference>
<dbReference type="PRO" id="PR:Q9EPU4"/>
<dbReference type="Proteomes" id="UP000000589">
    <property type="component" value="Chromosome 15"/>
</dbReference>
<dbReference type="RNAct" id="Q9EPU4">
    <property type="molecule type" value="protein"/>
</dbReference>
<dbReference type="Bgee" id="ENSMUSG00000034022">
    <property type="expression patterns" value="Expressed in dorsal pancreas and 257 other cell types or tissues"/>
</dbReference>
<dbReference type="ExpressionAtlas" id="Q9EPU4">
    <property type="expression patterns" value="baseline and differential"/>
</dbReference>
<dbReference type="GO" id="GO:0005847">
    <property type="term" value="C:mRNA cleavage and polyadenylation specificity factor complex"/>
    <property type="evidence" value="ECO:0000250"/>
    <property type="project" value="UniProtKB"/>
</dbReference>
<dbReference type="GO" id="GO:0005654">
    <property type="term" value="C:nucleoplasm"/>
    <property type="evidence" value="ECO:0007669"/>
    <property type="project" value="UniProtKB-SubCell"/>
</dbReference>
<dbReference type="GO" id="GO:0019899">
    <property type="term" value="F:enzyme binding"/>
    <property type="evidence" value="ECO:0007669"/>
    <property type="project" value="Ensembl"/>
</dbReference>
<dbReference type="GO" id="GO:0035925">
    <property type="term" value="F:mRNA 3'-UTR AU-rich region binding"/>
    <property type="evidence" value="ECO:0007669"/>
    <property type="project" value="Ensembl"/>
</dbReference>
<dbReference type="GO" id="GO:0006397">
    <property type="term" value="P:mRNA processing"/>
    <property type="evidence" value="ECO:0007669"/>
    <property type="project" value="UniProtKB-KW"/>
</dbReference>
<dbReference type="FunFam" id="1.10.150.910:FF:000005">
    <property type="entry name" value="Cleavage and polyadenylation specific factor 1"/>
    <property type="match status" value="1"/>
</dbReference>
<dbReference type="FunFam" id="2.130.10.10:FF:002223">
    <property type="entry name" value="Cleavage and polyadenylation specific factor 1"/>
    <property type="match status" value="1"/>
</dbReference>
<dbReference type="FunFam" id="2.130.10.10:FF:001659">
    <property type="entry name" value="Cleavage and polyadenylation specific factor 1, 160kDa (Predicted), isoform CRA_a"/>
    <property type="match status" value="1"/>
</dbReference>
<dbReference type="FunFam" id="2.130.10.10:FF:000118">
    <property type="entry name" value="Cleavage and polyadenylation specificity factor subunit 1"/>
    <property type="match status" value="1"/>
</dbReference>
<dbReference type="Gene3D" id="1.10.150.910">
    <property type="match status" value="1"/>
</dbReference>
<dbReference type="Gene3D" id="2.130.10.10">
    <property type="entry name" value="YVTN repeat-like/Quinoprotein amine dehydrogenase"/>
    <property type="match status" value="2"/>
</dbReference>
<dbReference type="InterPro" id="IPR018846">
    <property type="entry name" value="Beta-prop_RSE1/DDB1/CPSF1_1st"/>
</dbReference>
<dbReference type="InterPro" id="IPR004871">
    <property type="entry name" value="Cleavage/polyA-sp_fac_asu_C"/>
</dbReference>
<dbReference type="InterPro" id="IPR050358">
    <property type="entry name" value="RSE1/DDB1/CFT1/CPSF1"/>
</dbReference>
<dbReference type="InterPro" id="IPR015943">
    <property type="entry name" value="WD40/YVTN_repeat-like_dom_sf"/>
</dbReference>
<dbReference type="PANTHER" id="PTHR10644">
    <property type="entry name" value="DNA REPAIR/RNA PROCESSING CPSF FAMILY"/>
    <property type="match status" value="1"/>
</dbReference>
<dbReference type="Pfam" id="PF10433">
    <property type="entry name" value="Beta-prop_RSE1_1st"/>
    <property type="match status" value="1"/>
</dbReference>
<dbReference type="Pfam" id="PF23726">
    <property type="entry name" value="Beta-prop_RSE1_2nd"/>
    <property type="match status" value="1"/>
</dbReference>
<dbReference type="Pfam" id="PF03178">
    <property type="entry name" value="CPSF_A"/>
    <property type="match status" value="1"/>
</dbReference>
<comment type="function">
    <text evidence="2 3">Component of the cleavage and polyadenylation specificity factor (CPSF) complex that plays a key role in pre-mRNA 3'-end formation, recognizing the AAUAAA signal sequence and interacting with poly(A) polymerase and other factors to bring about cleavage and poly(A) addition. This subunit is involved in the RNA recognition step of the polyadenylation reaction (By similarity). May play a role in eye morphogenesis and the development of retinal ganglion cell projections to the midbrain (By similarity).</text>
</comment>
<comment type="subunit">
    <text evidence="1 5">Component of the cleavage and polyadenylation specificity factor (CPSF) complex, composed of CPSF1, CPSF2, CPSF3, CPSF4 and FIP1L1. Found in a complex with CPSF1, FIP1L1 and PAPOLA. Interacts with FIP1L1 and SRRM1. Interacts with TUT1; the interaction is direct and mediates the recruitment of the CPSF complex on the 3'UTR of selected pre-mRNAs (By similarity). Interacts with TENT2/GLD2.</text>
</comment>
<comment type="subcellular location">
    <subcellularLocation>
        <location evidence="1">Nucleus</location>
        <location evidence="1">Nucleoplasm</location>
    </subcellularLocation>
</comment>
<comment type="similarity">
    <text evidence="6">Belongs to the CPSF1 family.</text>
</comment>
<accession>Q9EPU4</accession>